<accession>Q5UQN6</accession>
<dbReference type="EMBL" id="AY653733">
    <property type="protein sequence ID" value="AAV50708.1"/>
    <property type="molecule type" value="Genomic_DNA"/>
</dbReference>
<dbReference type="KEGG" id="vg:9925066"/>
<dbReference type="Proteomes" id="UP000001134">
    <property type="component" value="Genome"/>
</dbReference>
<dbReference type="GO" id="GO:0044423">
    <property type="term" value="C:virion component"/>
    <property type="evidence" value="ECO:0007669"/>
    <property type="project" value="UniProtKB-KW"/>
</dbReference>
<evidence type="ECO:0000256" key="1">
    <source>
        <dbReference type="SAM" id="MobiDB-lite"/>
    </source>
</evidence>
<evidence type="ECO:0000269" key="2">
    <source>
    </source>
</evidence>
<organismHost>
    <name type="scientific">Acanthamoeba polyphaga</name>
    <name type="common">Amoeba</name>
    <dbReference type="NCBI Taxonomy" id="5757"/>
</organismHost>
<comment type="subcellular location">
    <subcellularLocation>
        <location evidence="2">Virion</location>
    </subcellularLocation>
</comment>
<organism>
    <name type="scientific">Acanthamoeba polyphaga mimivirus</name>
    <name type="common">APMV</name>
    <dbReference type="NCBI Taxonomy" id="212035"/>
    <lineage>
        <taxon>Viruses</taxon>
        <taxon>Varidnaviria</taxon>
        <taxon>Bamfordvirae</taxon>
        <taxon>Nucleocytoviricota</taxon>
        <taxon>Megaviricetes</taxon>
        <taxon>Imitervirales</taxon>
        <taxon>Mimiviridae</taxon>
        <taxon>Megamimivirinae</taxon>
        <taxon>Mimivirus</taxon>
        <taxon>Mimivirus bradfordmassiliense</taxon>
    </lineage>
</organism>
<name>YL442_MIMIV</name>
<gene>
    <name type="ordered locus">MIMI_L442</name>
</gene>
<proteinExistence type="evidence at protein level"/>
<protein>
    <recommendedName>
        <fullName>Uncharacterized protein L442</fullName>
    </recommendedName>
</protein>
<feature type="chain" id="PRO_0000253268" description="Uncharacterized protein L442">
    <location>
        <begin position="1"/>
        <end position="1259"/>
    </location>
</feature>
<feature type="region of interest" description="Disordered" evidence="1">
    <location>
        <begin position="354"/>
        <end position="410"/>
    </location>
</feature>
<feature type="compositionally biased region" description="Low complexity" evidence="1">
    <location>
        <begin position="362"/>
        <end position="410"/>
    </location>
</feature>
<sequence>MRGNNLRGGVGEYKINDVLGTRFQNFMDLVDQQKLTPFLVRNLDASLASATGSPYGLDDLHPDFAEYVMAVSAALRQIESPELTKVQVTGKYGNALESIVNDLFSGTTSGLIAQPTQPFGFNQLPFHNNHPNIKHLIPGFHLFPYTSAVYPTVNQNNNALINAILYLYHYISLLDLDSGVDARNIVSFLKKDNLVFNRYVNDIVTTMTNNNFFSQSLGFPTGQPTDEIVRDSVLQGLTGVAYQIVNRLRNVQASNQTFANLGAVAGQDISAKDAFAKFVSSVATPGYPGVNADKLFDAFSKITGGFYDQGPDVVNIADVDNDQAKQYRTNGLLNPVYILSPSIAKTVNADDYDKLNQAGGKRNSSMNNSTQNNNSSRSNNSARNNNSVWNNNNSAWKNNNSAWNDNSSWKNNNRFGQAGGITFGDIGAAPAGSVLSLPFLYGPALPDGSHKLITEDEQGDQNDAKLVDIDSVKEIEDLTDPNNITGIIPEIVDIGNDPNYNYARAQLVTLLYQLIVNEATFDQASGLPNLDNEIRNAAQNYNKIVVRLRAIPTSNFGSSMADLRDSFLSEFVNTSYRQFQVEKQTGNLITGQQTIANKGSNFANPDIKSFYDNTLVNNADFYKTYFNLVKLGPNGVVVDADVKDITEAKGKSDAELQNYRLNVRKNTGYTRFTGAQVGGLLGDIVFIDRIPAFPQDGSIRNVWLTRAIALTPVTLNAYNVEALRRIAREVYNSPVGQSTVPVYGQPVDLTLIAQSAARMNFPISNVAFRDTFNNLLQNALNQAATGTAVTPGFIEQEDKLVEHLLRVSSRWERDGNTFIFKDLSGNPVQTDPADNCLLIDTSTRECLSVLTQCIADPGTKLSDTCARLMEFNFKVNPPLNLLKDEISKMNPGVAFEILRKFGFGSYLAEDKDDSGSVIRRYKVQSVGSWIRELMGESARCAPGQAPVVNQGPCRTISLREELGQANADKILNMAKDSAPFLRYLEVLVHWVNANPQVLNPEETKDQSTLCPTSYPKVNDSFNTYSYLNPYKDVVYRLRNTTCDLERLKCSIMGNYLGSGSRKIFTDLATIPHDTNMPFTRIGFTSTVPLLNKVPMFGGDGGIYNLQNQLNNLNNPVGYNMFHQIYKDLLNTMGNIGDSRCIRLSSNTQARCEDKLESFKNAEIELNKCLNRLIERNKIYQATRGRIDLNRVPPENVAAVLEKHSNLLNMNSAYNKKAVNLIDIFQTIAKAIINKVEEGAPKQTVERPLTMGFHNPSYNF</sequence>
<reference key="1">
    <citation type="journal article" date="2004" name="Science">
        <title>The 1.2-megabase genome sequence of Mimivirus.</title>
        <authorList>
            <person name="Raoult D."/>
            <person name="Audic S."/>
            <person name="Robert C."/>
            <person name="Abergel C."/>
            <person name="Renesto P."/>
            <person name="Ogata H."/>
            <person name="La Scola B."/>
            <person name="Susan M."/>
            <person name="Claverie J.-M."/>
        </authorList>
    </citation>
    <scope>NUCLEOTIDE SEQUENCE [LARGE SCALE GENOMIC DNA]</scope>
    <source>
        <strain>Rowbotham-Bradford</strain>
    </source>
</reference>
<reference key="2">
    <citation type="journal article" date="2006" name="J. Virol.">
        <title>Mimivirus giant particles incorporate a large fraction of anonymous and unique gene products.</title>
        <authorList>
            <person name="Renesto P."/>
            <person name="Abergel C."/>
            <person name="Decloquement P."/>
            <person name="Moinier D."/>
            <person name="Azza S."/>
            <person name="Ogata H."/>
            <person name="Fourquet P."/>
            <person name="Gorvel J.-P."/>
            <person name="Claverie J.-M."/>
            <person name="Raoult D."/>
        </authorList>
    </citation>
    <scope>IDENTIFICATION BY MASS SPECTROMETRY [LARGE SCALE ANALYSIS]</scope>
    <scope>SUBCELLULAR LOCATION</scope>
</reference>
<keyword id="KW-1185">Reference proteome</keyword>
<keyword id="KW-0946">Virion</keyword>